<dbReference type="EC" id="2.7.7.8" evidence="1"/>
<dbReference type="EMBL" id="CP000822">
    <property type="protein sequence ID" value="ABV15616.1"/>
    <property type="status" value="ALT_INIT"/>
    <property type="molecule type" value="Genomic_DNA"/>
</dbReference>
<dbReference type="RefSeq" id="WP_024130984.1">
    <property type="nucleotide sequence ID" value="NC_009792.1"/>
</dbReference>
<dbReference type="SMR" id="A8AQ53"/>
<dbReference type="STRING" id="290338.CKO_04562"/>
<dbReference type="GeneID" id="45138108"/>
<dbReference type="KEGG" id="cko:CKO_04562"/>
<dbReference type="HOGENOM" id="CLU_004217_2_2_6"/>
<dbReference type="OrthoDB" id="9804305at2"/>
<dbReference type="Proteomes" id="UP000008148">
    <property type="component" value="Chromosome"/>
</dbReference>
<dbReference type="GO" id="GO:0005829">
    <property type="term" value="C:cytosol"/>
    <property type="evidence" value="ECO:0007669"/>
    <property type="project" value="TreeGrafter"/>
</dbReference>
<dbReference type="GO" id="GO:0000175">
    <property type="term" value="F:3'-5'-RNA exonuclease activity"/>
    <property type="evidence" value="ECO:0007669"/>
    <property type="project" value="TreeGrafter"/>
</dbReference>
<dbReference type="GO" id="GO:0000287">
    <property type="term" value="F:magnesium ion binding"/>
    <property type="evidence" value="ECO:0007669"/>
    <property type="project" value="UniProtKB-UniRule"/>
</dbReference>
<dbReference type="GO" id="GO:0004654">
    <property type="term" value="F:polyribonucleotide nucleotidyltransferase activity"/>
    <property type="evidence" value="ECO:0007669"/>
    <property type="project" value="UniProtKB-UniRule"/>
</dbReference>
<dbReference type="GO" id="GO:0003723">
    <property type="term" value="F:RNA binding"/>
    <property type="evidence" value="ECO:0007669"/>
    <property type="project" value="UniProtKB-UniRule"/>
</dbReference>
<dbReference type="GO" id="GO:0006402">
    <property type="term" value="P:mRNA catabolic process"/>
    <property type="evidence" value="ECO:0007669"/>
    <property type="project" value="UniProtKB-UniRule"/>
</dbReference>
<dbReference type="GO" id="GO:0006396">
    <property type="term" value="P:RNA processing"/>
    <property type="evidence" value="ECO:0007669"/>
    <property type="project" value="InterPro"/>
</dbReference>
<dbReference type="CDD" id="cd02393">
    <property type="entry name" value="KH-I_PNPase"/>
    <property type="match status" value="1"/>
</dbReference>
<dbReference type="CDD" id="cd11363">
    <property type="entry name" value="RNase_PH_PNPase_1"/>
    <property type="match status" value="1"/>
</dbReference>
<dbReference type="CDD" id="cd11364">
    <property type="entry name" value="RNase_PH_PNPase_2"/>
    <property type="match status" value="1"/>
</dbReference>
<dbReference type="CDD" id="cd04472">
    <property type="entry name" value="S1_PNPase"/>
    <property type="match status" value="1"/>
</dbReference>
<dbReference type="FunFam" id="2.40.50.140:FF:000023">
    <property type="entry name" value="Polyribonucleotide nucleotidyltransferase"/>
    <property type="match status" value="1"/>
</dbReference>
<dbReference type="FunFam" id="3.30.1370.10:FF:000001">
    <property type="entry name" value="Polyribonucleotide nucleotidyltransferase"/>
    <property type="match status" value="1"/>
</dbReference>
<dbReference type="FunFam" id="3.30.230.70:FF:000001">
    <property type="entry name" value="Polyribonucleotide nucleotidyltransferase"/>
    <property type="match status" value="1"/>
</dbReference>
<dbReference type="FunFam" id="3.30.230.70:FF:000002">
    <property type="entry name" value="Polyribonucleotide nucleotidyltransferase"/>
    <property type="match status" value="1"/>
</dbReference>
<dbReference type="Gene3D" id="3.30.230.70">
    <property type="entry name" value="GHMP Kinase, N-terminal domain"/>
    <property type="match status" value="2"/>
</dbReference>
<dbReference type="Gene3D" id="3.30.1370.10">
    <property type="entry name" value="K Homology domain, type 1"/>
    <property type="match status" value="1"/>
</dbReference>
<dbReference type="Gene3D" id="2.40.50.140">
    <property type="entry name" value="Nucleic acid-binding proteins"/>
    <property type="match status" value="1"/>
</dbReference>
<dbReference type="HAMAP" id="MF_01595">
    <property type="entry name" value="PNPase"/>
    <property type="match status" value="1"/>
</dbReference>
<dbReference type="InterPro" id="IPR001247">
    <property type="entry name" value="ExoRNase_PH_dom1"/>
</dbReference>
<dbReference type="InterPro" id="IPR015847">
    <property type="entry name" value="ExoRNase_PH_dom2"/>
</dbReference>
<dbReference type="InterPro" id="IPR036345">
    <property type="entry name" value="ExoRNase_PH_dom2_sf"/>
</dbReference>
<dbReference type="InterPro" id="IPR004087">
    <property type="entry name" value="KH_dom"/>
</dbReference>
<dbReference type="InterPro" id="IPR004088">
    <property type="entry name" value="KH_dom_type_1"/>
</dbReference>
<dbReference type="InterPro" id="IPR036612">
    <property type="entry name" value="KH_dom_type_1_sf"/>
</dbReference>
<dbReference type="InterPro" id="IPR012340">
    <property type="entry name" value="NA-bd_OB-fold"/>
</dbReference>
<dbReference type="InterPro" id="IPR012162">
    <property type="entry name" value="PNPase"/>
</dbReference>
<dbReference type="InterPro" id="IPR027408">
    <property type="entry name" value="PNPase/RNase_PH_dom_sf"/>
</dbReference>
<dbReference type="InterPro" id="IPR015848">
    <property type="entry name" value="PNPase_PH_RNA-bd_bac/org-type"/>
</dbReference>
<dbReference type="InterPro" id="IPR036456">
    <property type="entry name" value="PNPase_PH_RNA-bd_sf"/>
</dbReference>
<dbReference type="InterPro" id="IPR020568">
    <property type="entry name" value="Ribosomal_Su5_D2-typ_SF"/>
</dbReference>
<dbReference type="InterPro" id="IPR003029">
    <property type="entry name" value="S1_domain"/>
</dbReference>
<dbReference type="NCBIfam" id="TIGR03591">
    <property type="entry name" value="polynuc_phos"/>
    <property type="match status" value="1"/>
</dbReference>
<dbReference type="NCBIfam" id="NF008805">
    <property type="entry name" value="PRK11824.1"/>
    <property type="match status" value="1"/>
</dbReference>
<dbReference type="PANTHER" id="PTHR11252">
    <property type="entry name" value="POLYRIBONUCLEOTIDE NUCLEOTIDYLTRANSFERASE"/>
    <property type="match status" value="1"/>
</dbReference>
<dbReference type="PANTHER" id="PTHR11252:SF0">
    <property type="entry name" value="POLYRIBONUCLEOTIDE NUCLEOTIDYLTRANSFERASE 1, MITOCHONDRIAL"/>
    <property type="match status" value="1"/>
</dbReference>
<dbReference type="Pfam" id="PF00013">
    <property type="entry name" value="KH_1"/>
    <property type="match status" value="1"/>
</dbReference>
<dbReference type="Pfam" id="PF03726">
    <property type="entry name" value="PNPase"/>
    <property type="match status" value="1"/>
</dbReference>
<dbReference type="Pfam" id="PF01138">
    <property type="entry name" value="RNase_PH"/>
    <property type="match status" value="2"/>
</dbReference>
<dbReference type="Pfam" id="PF03725">
    <property type="entry name" value="RNase_PH_C"/>
    <property type="match status" value="2"/>
</dbReference>
<dbReference type="Pfam" id="PF00575">
    <property type="entry name" value="S1"/>
    <property type="match status" value="1"/>
</dbReference>
<dbReference type="PIRSF" id="PIRSF005499">
    <property type="entry name" value="PNPase"/>
    <property type="match status" value="1"/>
</dbReference>
<dbReference type="SMART" id="SM00322">
    <property type="entry name" value="KH"/>
    <property type="match status" value="1"/>
</dbReference>
<dbReference type="SMART" id="SM00316">
    <property type="entry name" value="S1"/>
    <property type="match status" value="1"/>
</dbReference>
<dbReference type="SUPFAM" id="SSF54791">
    <property type="entry name" value="Eukaryotic type KH-domain (KH-domain type I)"/>
    <property type="match status" value="1"/>
</dbReference>
<dbReference type="SUPFAM" id="SSF50249">
    <property type="entry name" value="Nucleic acid-binding proteins"/>
    <property type="match status" value="1"/>
</dbReference>
<dbReference type="SUPFAM" id="SSF46915">
    <property type="entry name" value="Polynucleotide phosphorylase/guanosine pentaphosphate synthase (PNPase/GPSI), domain 3"/>
    <property type="match status" value="1"/>
</dbReference>
<dbReference type="SUPFAM" id="SSF55666">
    <property type="entry name" value="Ribonuclease PH domain 2-like"/>
    <property type="match status" value="2"/>
</dbReference>
<dbReference type="SUPFAM" id="SSF54211">
    <property type="entry name" value="Ribosomal protein S5 domain 2-like"/>
    <property type="match status" value="2"/>
</dbReference>
<dbReference type="PROSITE" id="PS50084">
    <property type="entry name" value="KH_TYPE_1"/>
    <property type="match status" value="1"/>
</dbReference>
<dbReference type="PROSITE" id="PS50126">
    <property type="entry name" value="S1"/>
    <property type="match status" value="1"/>
</dbReference>
<sequence>MLNPIVRKFQYGQHTVTLETGMMARQATAAVMVSMDDTAVFVTVVGQKKAKPGQDFFPLTVNYQERTYAAGRIPGSFFRREGRPSEGETLIARLIDRPVRPLFPEGFVNEVQVIATVVSVNPQVNPDIVAMIGASAALSLSGIPFNGPIGAARVGYINDQYVLNPTQDELKESKLDLVVAGTEAAVLMVESEAELLSEDTMLGAVVFGHEQQQIVIQNINDLVKEAGKPRWDWQQEAVNEALNARVAALAEARLSDAYRITDKQERYAQVDVIKSETIAALVAEDETLDENELGEILHAIEKNVVRSRVLAGEPRIDGREKDMIRGLDVRTGVLPRTHGSALFTRGETQALVTATLGTARDAQVLDELMGERTDSFLFHYNFPPYSVGETGMVGSPKRREIGHGRLAKRGVLAVMPEMDKFPYTVRVVSEITESNGSSSMASVCGASLALMDAGVPIKAAVAGIAMGLVKEGDNFVVLSDILGDEDHLGDMDFKVAGSRDGISALQMDIKIEGITKEIMQVALNQAKGARLHILGVMEQAINAPRGDISQFAPRIHTIKINPDKIKDVIGKGGSVIRALTEETGTTIEIEDDGTVKIAATDGEKAKHAIRRIEEITAEIEVGRIYNGKVTRIVDFGAFVAIGGGKEGLVHISQIADKRVEKVTDYLQMGQEVPVKVLEVDRQGRVRLSIKEATEQSQPAAAPEAPAAEQGE</sequence>
<proteinExistence type="inferred from homology"/>
<name>PNP_CITK8</name>
<keyword id="KW-0963">Cytoplasm</keyword>
<keyword id="KW-0460">Magnesium</keyword>
<keyword id="KW-0479">Metal-binding</keyword>
<keyword id="KW-0548">Nucleotidyltransferase</keyword>
<keyword id="KW-1185">Reference proteome</keyword>
<keyword id="KW-0694">RNA-binding</keyword>
<keyword id="KW-0808">Transferase</keyword>
<accession>A8AQ53</accession>
<reference key="1">
    <citation type="submission" date="2007-08" db="EMBL/GenBank/DDBJ databases">
        <authorList>
            <consortium name="The Citrobacter koseri Genome Sequencing Project"/>
            <person name="McClelland M."/>
            <person name="Sanderson E.K."/>
            <person name="Porwollik S."/>
            <person name="Spieth J."/>
            <person name="Clifton W.S."/>
            <person name="Latreille P."/>
            <person name="Courtney L."/>
            <person name="Wang C."/>
            <person name="Pepin K."/>
            <person name="Bhonagiri V."/>
            <person name="Nash W."/>
            <person name="Johnson M."/>
            <person name="Thiruvilangam P."/>
            <person name="Wilson R."/>
        </authorList>
    </citation>
    <scope>NUCLEOTIDE SEQUENCE [LARGE SCALE GENOMIC DNA]</scope>
    <source>
        <strain>ATCC BAA-895 / CDC 4225-83 / SGSC4696</strain>
    </source>
</reference>
<protein>
    <recommendedName>
        <fullName evidence="1">Polyribonucleotide nucleotidyltransferase</fullName>
        <ecNumber evidence="1">2.7.7.8</ecNumber>
    </recommendedName>
    <alternativeName>
        <fullName evidence="1">Polynucleotide phosphorylase</fullName>
        <shortName evidence="1">PNPase</shortName>
    </alternativeName>
</protein>
<gene>
    <name evidence="1" type="primary">pnp</name>
    <name type="ordered locus">CKO_04562</name>
</gene>
<feature type="chain" id="PRO_0000329591" description="Polyribonucleotide nucleotidyltransferase">
    <location>
        <begin position="1"/>
        <end position="711"/>
    </location>
</feature>
<feature type="domain" description="KH" evidence="1">
    <location>
        <begin position="553"/>
        <end position="612"/>
    </location>
</feature>
<feature type="domain" description="S1 motif" evidence="1">
    <location>
        <begin position="622"/>
        <end position="690"/>
    </location>
</feature>
<feature type="region of interest" description="Disordered" evidence="2">
    <location>
        <begin position="690"/>
        <end position="711"/>
    </location>
</feature>
<feature type="compositionally biased region" description="Low complexity" evidence="2">
    <location>
        <begin position="694"/>
        <end position="711"/>
    </location>
</feature>
<feature type="binding site" evidence="1">
    <location>
        <position position="486"/>
    </location>
    <ligand>
        <name>Mg(2+)</name>
        <dbReference type="ChEBI" id="CHEBI:18420"/>
    </ligand>
</feature>
<feature type="binding site" evidence="1">
    <location>
        <position position="492"/>
    </location>
    <ligand>
        <name>Mg(2+)</name>
        <dbReference type="ChEBI" id="CHEBI:18420"/>
    </ligand>
</feature>
<organism>
    <name type="scientific">Citrobacter koseri (strain ATCC BAA-895 / CDC 4225-83 / SGSC4696)</name>
    <dbReference type="NCBI Taxonomy" id="290338"/>
    <lineage>
        <taxon>Bacteria</taxon>
        <taxon>Pseudomonadati</taxon>
        <taxon>Pseudomonadota</taxon>
        <taxon>Gammaproteobacteria</taxon>
        <taxon>Enterobacterales</taxon>
        <taxon>Enterobacteriaceae</taxon>
        <taxon>Citrobacter</taxon>
    </lineage>
</organism>
<evidence type="ECO:0000255" key="1">
    <source>
        <dbReference type="HAMAP-Rule" id="MF_01595"/>
    </source>
</evidence>
<evidence type="ECO:0000256" key="2">
    <source>
        <dbReference type="SAM" id="MobiDB-lite"/>
    </source>
</evidence>
<evidence type="ECO:0000305" key="3"/>
<comment type="function">
    <text evidence="1">Involved in mRNA degradation. Catalyzes the phosphorolysis of single-stranded polyribonucleotides processively in the 3'- to 5'-direction.</text>
</comment>
<comment type="catalytic activity">
    <reaction evidence="1">
        <text>RNA(n+1) + phosphate = RNA(n) + a ribonucleoside 5'-diphosphate</text>
        <dbReference type="Rhea" id="RHEA:22096"/>
        <dbReference type="Rhea" id="RHEA-COMP:14527"/>
        <dbReference type="Rhea" id="RHEA-COMP:17342"/>
        <dbReference type="ChEBI" id="CHEBI:43474"/>
        <dbReference type="ChEBI" id="CHEBI:57930"/>
        <dbReference type="ChEBI" id="CHEBI:140395"/>
        <dbReference type="EC" id="2.7.7.8"/>
    </reaction>
</comment>
<comment type="cofactor">
    <cofactor evidence="1">
        <name>Mg(2+)</name>
        <dbReference type="ChEBI" id="CHEBI:18420"/>
    </cofactor>
</comment>
<comment type="subunit">
    <text evidence="1">Component of the RNA degradosome, which is a multiprotein complex involved in RNA processing and mRNA degradation.</text>
</comment>
<comment type="subcellular location">
    <subcellularLocation>
        <location evidence="1">Cytoplasm</location>
    </subcellularLocation>
</comment>
<comment type="similarity">
    <text evidence="1">Belongs to the polyribonucleotide nucleotidyltransferase family.</text>
</comment>
<comment type="sequence caution" evidence="3">
    <conflict type="erroneous initiation">
        <sequence resource="EMBL-CDS" id="ABV15616"/>
    </conflict>
</comment>